<name>PNP_RICPU</name>
<comment type="function">
    <text evidence="1">Involved in mRNA degradation. Catalyzes the phosphorolysis of single-stranded polyribonucleotides processively in the 3'- to 5'-direction.</text>
</comment>
<comment type="catalytic activity">
    <reaction evidence="1">
        <text>RNA(n+1) + phosphate = RNA(n) + a ribonucleoside 5'-diphosphate</text>
        <dbReference type="Rhea" id="RHEA:22096"/>
        <dbReference type="Rhea" id="RHEA-COMP:14527"/>
        <dbReference type="Rhea" id="RHEA-COMP:17342"/>
        <dbReference type="ChEBI" id="CHEBI:43474"/>
        <dbReference type="ChEBI" id="CHEBI:57930"/>
        <dbReference type="ChEBI" id="CHEBI:140395"/>
        <dbReference type="EC" id="2.7.7.8"/>
    </reaction>
</comment>
<comment type="cofactor">
    <cofactor evidence="1">
        <name>Mg(2+)</name>
        <dbReference type="ChEBI" id="CHEBI:18420"/>
    </cofactor>
</comment>
<comment type="subcellular location">
    <subcellularLocation>
        <location evidence="1">Cytoplasm</location>
    </subcellularLocation>
</comment>
<comment type="similarity">
    <text evidence="1">Belongs to the polyribonucleotide nucleotidyltransferase family.</text>
</comment>
<keyword id="KW-0963">Cytoplasm</keyword>
<keyword id="KW-0460">Magnesium</keyword>
<keyword id="KW-0479">Metal-binding</keyword>
<keyword id="KW-0548">Nucleotidyltransferase</keyword>
<keyword id="KW-0694">RNA-binding</keyword>
<keyword id="KW-0808">Transferase</keyword>
<accession>C4K0F4</accession>
<gene>
    <name evidence="1" type="primary">pnp</name>
    <name type="ordered locus">RPR_00280</name>
</gene>
<organism>
    <name type="scientific">Rickettsia peacockii (strain Rustic)</name>
    <dbReference type="NCBI Taxonomy" id="562019"/>
    <lineage>
        <taxon>Bacteria</taxon>
        <taxon>Pseudomonadati</taxon>
        <taxon>Pseudomonadota</taxon>
        <taxon>Alphaproteobacteria</taxon>
        <taxon>Rickettsiales</taxon>
        <taxon>Rickettsiaceae</taxon>
        <taxon>Rickettsieae</taxon>
        <taxon>Rickettsia</taxon>
        <taxon>spotted fever group</taxon>
    </lineage>
</organism>
<dbReference type="EC" id="2.7.7.8" evidence="1"/>
<dbReference type="EMBL" id="CP001227">
    <property type="protein sequence ID" value="ACR47056.1"/>
    <property type="molecule type" value="Genomic_DNA"/>
</dbReference>
<dbReference type="RefSeq" id="WP_012736362.1">
    <property type="nucleotide sequence ID" value="NC_012730.1"/>
</dbReference>
<dbReference type="SMR" id="C4K0F4"/>
<dbReference type="KEGG" id="rpk:RPR_00280"/>
<dbReference type="HOGENOM" id="CLU_004217_2_2_5"/>
<dbReference type="Proteomes" id="UP000005015">
    <property type="component" value="Chromosome"/>
</dbReference>
<dbReference type="GO" id="GO:0005829">
    <property type="term" value="C:cytosol"/>
    <property type="evidence" value="ECO:0007669"/>
    <property type="project" value="TreeGrafter"/>
</dbReference>
<dbReference type="GO" id="GO:0000175">
    <property type="term" value="F:3'-5'-RNA exonuclease activity"/>
    <property type="evidence" value="ECO:0007669"/>
    <property type="project" value="TreeGrafter"/>
</dbReference>
<dbReference type="GO" id="GO:0000287">
    <property type="term" value="F:magnesium ion binding"/>
    <property type="evidence" value="ECO:0007669"/>
    <property type="project" value="UniProtKB-UniRule"/>
</dbReference>
<dbReference type="GO" id="GO:0004654">
    <property type="term" value="F:polyribonucleotide nucleotidyltransferase activity"/>
    <property type="evidence" value="ECO:0007669"/>
    <property type="project" value="UniProtKB-UniRule"/>
</dbReference>
<dbReference type="GO" id="GO:0003723">
    <property type="term" value="F:RNA binding"/>
    <property type="evidence" value="ECO:0007669"/>
    <property type="project" value="UniProtKB-UniRule"/>
</dbReference>
<dbReference type="GO" id="GO:0006402">
    <property type="term" value="P:mRNA catabolic process"/>
    <property type="evidence" value="ECO:0007669"/>
    <property type="project" value="UniProtKB-UniRule"/>
</dbReference>
<dbReference type="GO" id="GO:0006396">
    <property type="term" value="P:RNA processing"/>
    <property type="evidence" value="ECO:0007669"/>
    <property type="project" value="InterPro"/>
</dbReference>
<dbReference type="CDD" id="cd02393">
    <property type="entry name" value="KH-I_PNPase"/>
    <property type="match status" value="1"/>
</dbReference>
<dbReference type="CDD" id="cd11363">
    <property type="entry name" value="RNase_PH_PNPase_1"/>
    <property type="match status" value="1"/>
</dbReference>
<dbReference type="CDD" id="cd11364">
    <property type="entry name" value="RNase_PH_PNPase_2"/>
    <property type="match status" value="1"/>
</dbReference>
<dbReference type="FunFam" id="3.30.1370.10:FF:000001">
    <property type="entry name" value="Polyribonucleotide nucleotidyltransferase"/>
    <property type="match status" value="1"/>
</dbReference>
<dbReference type="FunFam" id="3.30.230.70:FF:000001">
    <property type="entry name" value="Polyribonucleotide nucleotidyltransferase"/>
    <property type="match status" value="1"/>
</dbReference>
<dbReference type="FunFam" id="3.30.230.70:FF:000002">
    <property type="entry name" value="Polyribonucleotide nucleotidyltransferase"/>
    <property type="match status" value="1"/>
</dbReference>
<dbReference type="FunFam" id="2.40.50.140:FF:000189">
    <property type="entry name" value="Polyribonucleotide nucleotidyltransferase, putative"/>
    <property type="match status" value="1"/>
</dbReference>
<dbReference type="Gene3D" id="3.30.230.70">
    <property type="entry name" value="GHMP Kinase, N-terminal domain"/>
    <property type="match status" value="2"/>
</dbReference>
<dbReference type="Gene3D" id="3.30.1370.10">
    <property type="entry name" value="K Homology domain, type 1"/>
    <property type="match status" value="1"/>
</dbReference>
<dbReference type="Gene3D" id="2.40.50.140">
    <property type="entry name" value="Nucleic acid-binding proteins"/>
    <property type="match status" value="1"/>
</dbReference>
<dbReference type="HAMAP" id="MF_01595">
    <property type="entry name" value="PNPase"/>
    <property type="match status" value="1"/>
</dbReference>
<dbReference type="InterPro" id="IPR001247">
    <property type="entry name" value="ExoRNase_PH_dom1"/>
</dbReference>
<dbReference type="InterPro" id="IPR015847">
    <property type="entry name" value="ExoRNase_PH_dom2"/>
</dbReference>
<dbReference type="InterPro" id="IPR036345">
    <property type="entry name" value="ExoRNase_PH_dom2_sf"/>
</dbReference>
<dbReference type="InterPro" id="IPR004087">
    <property type="entry name" value="KH_dom"/>
</dbReference>
<dbReference type="InterPro" id="IPR004088">
    <property type="entry name" value="KH_dom_type_1"/>
</dbReference>
<dbReference type="InterPro" id="IPR036612">
    <property type="entry name" value="KH_dom_type_1_sf"/>
</dbReference>
<dbReference type="InterPro" id="IPR012340">
    <property type="entry name" value="NA-bd_OB-fold"/>
</dbReference>
<dbReference type="InterPro" id="IPR012162">
    <property type="entry name" value="PNPase"/>
</dbReference>
<dbReference type="InterPro" id="IPR027408">
    <property type="entry name" value="PNPase/RNase_PH_dom_sf"/>
</dbReference>
<dbReference type="InterPro" id="IPR015848">
    <property type="entry name" value="PNPase_PH_RNA-bd_bac/org-type"/>
</dbReference>
<dbReference type="InterPro" id="IPR036456">
    <property type="entry name" value="PNPase_PH_RNA-bd_sf"/>
</dbReference>
<dbReference type="InterPro" id="IPR020568">
    <property type="entry name" value="Ribosomal_Su5_D2-typ_SF"/>
</dbReference>
<dbReference type="InterPro" id="IPR003029">
    <property type="entry name" value="S1_domain"/>
</dbReference>
<dbReference type="NCBIfam" id="TIGR03591">
    <property type="entry name" value="polynuc_phos"/>
    <property type="match status" value="1"/>
</dbReference>
<dbReference type="NCBIfam" id="NF008805">
    <property type="entry name" value="PRK11824.1"/>
    <property type="match status" value="1"/>
</dbReference>
<dbReference type="PANTHER" id="PTHR11252">
    <property type="entry name" value="POLYRIBONUCLEOTIDE NUCLEOTIDYLTRANSFERASE"/>
    <property type="match status" value="1"/>
</dbReference>
<dbReference type="PANTHER" id="PTHR11252:SF0">
    <property type="entry name" value="POLYRIBONUCLEOTIDE NUCLEOTIDYLTRANSFERASE 1, MITOCHONDRIAL"/>
    <property type="match status" value="1"/>
</dbReference>
<dbReference type="Pfam" id="PF00013">
    <property type="entry name" value="KH_1"/>
    <property type="match status" value="1"/>
</dbReference>
<dbReference type="Pfam" id="PF03726">
    <property type="entry name" value="PNPase"/>
    <property type="match status" value="1"/>
</dbReference>
<dbReference type="Pfam" id="PF01138">
    <property type="entry name" value="RNase_PH"/>
    <property type="match status" value="2"/>
</dbReference>
<dbReference type="Pfam" id="PF03725">
    <property type="entry name" value="RNase_PH_C"/>
    <property type="match status" value="1"/>
</dbReference>
<dbReference type="Pfam" id="PF00575">
    <property type="entry name" value="S1"/>
    <property type="match status" value="1"/>
</dbReference>
<dbReference type="PIRSF" id="PIRSF005499">
    <property type="entry name" value="PNPase"/>
    <property type="match status" value="1"/>
</dbReference>
<dbReference type="SMART" id="SM00322">
    <property type="entry name" value="KH"/>
    <property type="match status" value="1"/>
</dbReference>
<dbReference type="SMART" id="SM00316">
    <property type="entry name" value="S1"/>
    <property type="match status" value="1"/>
</dbReference>
<dbReference type="SUPFAM" id="SSF54791">
    <property type="entry name" value="Eukaryotic type KH-domain (KH-domain type I)"/>
    <property type="match status" value="1"/>
</dbReference>
<dbReference type="SUPFAM" id="SSF50249">
    <property type="entry name" value="Nucleic acid-binding proteins"/>
    <property type="match status" value="1"/>
</dbReference>
<dbReference type="SUPFAM" id="SSF46915">
    <property type="entry name" value="Polynucleotide phosphorylase/guanosine pentaphosphate synthase (PNPase/GPSI), domain 3"/>
    <property type="match status" value="1"/>
</dbReference>
<dbReference type="SUPFAM" id="SSF55666">
    <property type="entry name" value="Ribonuclease PH domain 2-like"/>
    <property type="match status" value="2"/>
</dbReference>
<dbReference type="SUPFAM" id="SSF54211">
    <property type="entry name" value="Ribosomal protein S5 domain 2-like"/>
    <property type="match status" value="2"/>
</dbReference>
<dbReference type="PROSITE" id="PS50084">
    <property type="entry name" value="KH_TYPE_1"/>
    <property type="match status" value="1"/>
</dbReference>
<dbReference type="PROSITE" id="PS50126">
    <property type="entry name" value="S1"/>
    <property type="match status" value="1"/>
</dbReference>
<proteinExistence type="inferred from homology"/>
<evidence type="ECO:0000255" key="1">
    <source>
        <dbReference type="HAMAP-Rule" id="MF_01595"/>
    </source>
</evidence>
<evidence type="ECO:0000256" key="2">
    <source>
        <dbReference type="SAM" id="MobiDB-lite"/>
    </source>
</evidence>
<reference key="1">
    <citation type="journal article" date="2009" name="PLoS ONE">
        <title>Genome sequence of the endosymbiont Rickettsia peacockii and comparison with virulent Rickettsia rickettsii: identification of virulence factors.</title>
        <authorList>
            <person name="Felsheim R.F."/>
            <person name="Kurtti T.J."/>
            <person name="Munderloh U.G."/>
        </authorList>
    </citation>
    <scope>NUCLEOTIDE SEQUENCE [LARGE SCALE GENOMIC DNA]</scope>
    <source>
        <strain>Rustic</strain>
    </source>
</reference>
<sequence length="748" mass="81963">MFNEITKSVTWNGQVLELSTGKIARQADGAVTVKMGNSVLLCTAVVANKAKEGIGLLPLTINYREMAYAAGKIPGGFFKHEGKASDREVLVSRLIDRPIRPLFHPAFVNETHVTCSVLSYDPETPVDILAIIGASAALSLSPAPYLEIVAASKVGLINGEFVLNPTLALLKTSQLDLVVAGTSGSVMMVESEAHLLSEEQMLEAVKFGFESFQPVIKIIKELAEEAKKPKLEMQALYPASLKKEIEKLFVKEIEQAFAIKSKQERSTNLDLIPEKVLTHFVSDIENKKYSNYQIESALKAIESDILRNEILEKNRRIDGRSTTDIRQIACEIGLLPSAHGSALFTRGETQSLVSTTFGTSLDEQIVDSLEGEYKERFMLNYIFPPYSVNEAMPMKAPSRREVGHGKLAWRAINPILPNKVQFPYSIRVVAETTESNGSSSMATVCGSSLALMYAGVPIKAPVAGIAMGLVKEGKNFAVLSDILGDEDYFGDMDFKVAGTSEGITALQMDIKISGVDFKIMKVALEQARLGRLHILEQMNKVISKPNNELSKNAPSTTTIKIDKDKIRDIIGPSGKVIKEICETSGAKIDISDDGTVSVYASDRDKLKVALDKIKAIVVEPEIGEIFNGTVVKVLDSGAFINYVGNKDGFVHISEVSGERIETVSSVLKQGDIVKVKLIGFDNKGKAKLTIKNADKDKSSNNTKPKTHVNNTKDNSEPEQRRDSSKKRAWNEDNNAEIAEVITERKYFN</sequence>
<protein>
    <recommendedName>
        <fullName evidence="1">Polyribonucleotide nucleotidyltransferase</fullName>
        <ecNumber evidence="1">2.7.7.8</ecNumber>
    </recommendedName>
    <alternativeName>
        <fullName evidence="1">Polynucleotide phosphorylase</fullName>
        <shortName evidence="1">PNPase</shortName>
    </alternativeName>
</protein>
<feature type="chain" id="PRO_1000215668" description="Polyribonucleotide nucleotidyltransferase">
    <location>
        <begin position="1"/>
        <end position="748"/>
    </location>
</feature>
<feature type="domain" description="KH" evidence="1">
    <location>
        <begin position="554"/>
        <end position="613"/>
    </location>
</feature>
<feature type="domain" description="S1 motif" evidence="1">
    <location>
        <begin position="623"/>
        <end position="691"/>
    </location>
</feature>
<feature type="region of interest" description="Disordered" evidence="2">
    <location>
        <begin position="693"/>
        <end position="733"/>
    </location>
</feature>
<feature type="compositionally biased region" description="Polar residues" evidence="2">
    <location>
        <begin position="699"/>
        <end position="712"/>
    </location>
</feature>
<feature type="compositionally biased region" description="Basic and acidic residues" evidence="2">
    <location>
        <begin position="713"/>
        <end position="722"/>
    </location>
</feature>
<feature type="binding site" evidence="1">
    <location>
        <position position="487"/>
    </location>
    <ligand>
        <name>Mg(2+)</name>
        <dbReference type="ChEBI" id="CHEBI:18420"/>
    </ligand>
</feature>
<feature type="binding site" evidence="1">
    <location>
        <position position="493"/>
    </location>
    <ligand>
        <name>Mg(2+)</name>
        <dbReference type="ChEBI" id="CHEBI:18420"/>
    </ligand>
</feature>